<gene>
    <name type="primary">Tyro3</name>
    <name type="synonym">Sky</name>
</gene>
<feature type="signal peptide" evidence="3">
    <location>
        <begin position="1"/>
        <end position="30"/>
    </location>
</feature>
<feature type="chain" id="PRO_0000024480" description="Tyrosine-protein kinase receptor TYRO3">
    <location>
        <begin position="31"/>
        <end position="880"/>
    </location>
</feature>
<feature type="topological domain" description="Extracellular" evidence="3">
    <location>
        <begin position="31"/>
        <end position="419"/>
    </location>
</feature>
<feature type="transmembrane region" description="Helical" evidence="3">
    <location>
        <begin position="420"/>
        <end position="440"/>
    </location>
</feature>
<feature type="topological domain" description="Cytoplasmic" evidence="3">
    <location>
        <begin position="441"/>
        <end position="880"/>
    </location>
</feature>
<feature type="domain" description="Ig-like C2-type 1">
    <location>
        <begin position="31"/>
        <end position="118"/>
    </location>
</feature>
<feature type="domain" description="Ig-like C2-type 2">
    <location>
        <begin position="129"/>
        <end position="210"/>
    </location>
</feature>
<feature type="domain" description="Fibronectin type-III 1" evidence="6">
    <location>
        <begin position="217"/>
        <end position="310"/>
    </location>
</feature>
<feature type="domain" description="Fibronectin type-III 2" evidence="6">
    <location>
        <begin position="315"/>
        <end position="406"/>
    </location>
</feature>
<feature type="domain" description="Protein kinase" evidence="5">
    <location>
        <begin position="508"/>
        <end position="785"/>
    </location>
</feature>
<feature type="region of interest" description="Disordered" evidence="8">
    <location>
        <begin position="804"/>
        <end position="827"/>
    </location>
</feature>
<feature type="region of interest" description="Disordered" evidence="8">
    <location>
        <begin position="842"/>
        <end position="864"/>
    </location>
</feature>
<feature type="compositionally biased region" description="Polar residues" evidence="8">
    <location>
        <begin position="852"/>
        <end position="864"/>
    </location>
</feature>
<feature type="active site" description="Proton acceptor" evidence="5 7">
    <location>
        <position position="645"/>
    </location>
</feature>
<feature type="binding site" evidence="5">
    <location>
        <begin position="514"/>
        <end position="522"/>
    </location>
    <ligand>
        <name>ATP</name>
        <dbReference type="ChEBI" id="CHEBI:30616"/>
    </ligand>
</feature>
<feature type="binding site" evidence="5">
    <location>
        <position position="540"/>
    </location>
    <ligand>
        <name>ATP</name>
        <dbReference type="ChEBI" id="CHEBI:30616"/>
    </ligand>
</feature>
<feature type="modified residue" description="Phosphoserine" evidence="2">
    <location>
        <position position="456"/>
    </location>
</feature>
<feature type="modified residue" description="Phosphotyrosine; by autocatalysis" evidence="1">
    <location>
        <position position="671"/>
    </location>
</feature>
<feature type="modified residue" description="Phosphotyrosine; by autocatalysis" evidence="1">
    <location>
        <position position="675"/>
    </location>
</feature>
<feature type="modified residue" description="Phosphotyrosine; by autocatalysis" evidence="1">
    <location>
        <position position="676"/>
    </location>
</feature>
<feature type="modified residue" description="Phosphotyrosine; by autocatalysis" evidence="1">
    <location>
        <position position="794"/>
    </location>
</feature>
<feature type="modified residue" description="Phosphoserine" evidence="2">
    <location>
        <position position="808"/>
    </location>
</feature>
<feature type="modified residue" description="Phosphoserine" evidence="9">
    <location>
        <position position="859"/>
    </location>
</feature>
<feature type="glycosylation site" description="N-linked (GlcNAc...) asparagine" evidence="3">
    <location>
        <position position="53"/>
    </location>
</feature>
<feature type="glycosylation site" description="N-linked (GlcNAc...) asparagine" evidence="3">
    <location>
        <position position="75"/>
    </location>
</feature>
<feature type="glycosylation site" description="N-linked (GlcNAc...) asparagine" evidence="3">
    <location>
        <position position="181"/>
    </location>
</feature>
<feature type="glycosylation site" description="N-linked (GlcNAc...) asparagine" evidence="3">
    <location>
        <position position="220"/>
    </location>
</feature>
<feature type="glycosylation site" description="N-linked (GlcNAc...) asparagine" evidence="3">
    <location>
        <position position="230"/>
    </location>
</feature>
<feature type="glycosylation site" description="N-linked (GlcNAc...) asparagine" evidence="3">
    <location>
        <position position="283"/>
    </location>
</feature>
<feature type="glycosylation site" description="N-linked (GlcNAc...) asparagine" evidence="3">
    <location>
        <position position="356"/>
    </location>
</feature>
<feature type="glycosylation site" description="N-linked (GlcNAc...) asparagine" evidence="3">
    <location>
        <position position="370"/>
    </location>
</feature>
<feature type="disulfide bond" evidence="4">
    <location>
        <begin position="54"/>
        <end position="107"/>
    </location>
</feature>
<feature type="disulfide bond" evidence="4">
    <location>
        <begin position="150"/>
        <end position="193"/>
    </location>
</feature>
<sequence length="880" mass="95919">MALRRSMGRPGLRPLLLAGLASLLLPGSAAAGLKLMGAPVKMTVSQGQPVKLNCSVEGMDDPDIHWMKDGAVVQNASQVSISISEQNWIGLLSLKSAERSDAGLYWCQVKDGEETKISQSVWLTVEGVPFFTVEPKDLAVPPNVPFQLSCEAVGPPEPVTIFWWRGPTKVGGPASSPSVLNVTGVTQRTEFSCEAHNIKGLATSRPAIIRLQAPPAAPFNITVTTISSSNASVAWVPGADGLALLHSCTVQVAHAPGEWEALAVVVPVPPFTCLLRNLAPATNYSLRVRCANALGPSPYGDWVPFQTKGLAPARAPQNFHAIRTDSGLILEWEEVIPEDPGEGPLGPYKLSWVQENGTQDELMVEGTTANLTDWDPQKDLVLRVCASNAIGDGPWSQPLVVSSHDHAGRQGPPHSRTSWVPVVLGVLTALITAAALALILLRKRRKETRFGQAFDSVMARGEPAVHFRAARSFNRERPERIEATLDSLGISDELKEKLEDVLIPEQQFTLGRMLGKGEFGSVREAQLKQEDGSFVKVAVKMLKADIIASSDIEEFLREAACMKEFDHPHVAKLVGVSLRSRAKGRLPIPMVILPFMKHGDLHAFLLASRIGENPFNLPLQTLVRFMVDIACGMEYLSSRNFIHRDLAARNCMLAEDMTVCVADFGLSRKIYSGDYYRQGCASKLPVKWLALESLADNLYTVHSDVWAFGVTMWEIMTRGQTPYAGIENAEIYNYLISGNRLKQPPECMEEVYDLMYQCWSADPKQRPSFTCLRMELENILGHLSVLSTSQDPLYINIERAGQPAENGSPELPCGEQSSSEAGDGSGMGAIGGIPSDCRYIFSPGGLAESPGQLEQQPESPLNENQRLLLLQQGLLPHSSC</sequence>
<dbReference type="EC" id="2.7.10.1"/>
<dbReference type="EMBL" id="D37880">
    <property type="protein sequence ID" value="BAA07119.1"/>
    <property type="molecule type" value="mRNA"/>
</dbReference>
<dbReference type="PIR" id="JC4166">
    <property type="entry name" value="JC4166"/>
</dbReference>
<dbReference type="RefSeq" id="NP_058788.1">
    <property type="nucleotide sequence ID" value="NM_017092.1"/>
</dbReference>
<dbReference type="SMR" id="P55146"/>
<dbReference type="BioGRID" id="247273">
    <property type="interactions" value="1"/>
</dbReference>
<dbReference type="FunCoup" id="P55146">
    <property type="interactions" value="915"/>
</dbReference>
<dbReference type="STRING" id="10116.ENSRNOP00000069466"/>
<dbReference type="GlyCosmos" id="P55146">
    <property type="glycosylation" value="8 sites, No reported glycans"/>
</dbReference>
<dbReference type="GlyGen" id="P55146">
    <property type="glycosylation" value="8 sites"/>
</dbReference>
<dbReference type="iPTMnet" id="P55146"/>
<dbReference type="PhosphoSitePlus" id="P55146"/>
<dbReference type="PaxDb" id="10116-ENSRNOP00000007656"/>
<dbReference type="GeneID" id="25232"/>
<dbReference type="KEGG" id="rno:25232"/>
<dbReference type="UCSC" id="RGD:3923">
    <property type="organism name" value="rat"/>
</dbReference>
<dbReference type="AGR" id="RGD:3923"/>
<dbReference type="CTD" id="7301"/>
<dbReference type="RGD" id="3923">
    <property type="gene designation" value="Tyro3"/>
</dbReference>
<dbReference type="eggNOG" id="ENOG502QRYR">
    <property type="taxonomic scope" value="Eukaryota"/>
</dbReference>
<dbReference type="InParanoid" id="P55146"/>
<dbReference type="OrthoDB" id="30561at9989"/>
<dbReference type="PhylomeDB" id="P55146"/>
<dbReference type="BRENDA" id="2.7.10.1">
    <property type="organism ID" value="5301"/>
</dbReference>
<dbReference type="PRO" id="PR:P55146"/>
<dbReference type="Proteomes" id="UP000002494">
    <property type="component" value="Unplaced"/>
</dbReference>
<dbReference type="GO" id="GO:0009986">
    <property type="term" value="C:cell surface"/>
    <property type="evidence" value="ECO:0000266"/>
    <property type="project" value="RGD"/>
</dbReference>
<dbReference type="GO" id="GO:0005789">
    <property type="term" value="C:endoplasmic reticulum membrane"/>
    <property type="evidence" value="ECO:0000314"/>
    <property type="project" value="UniProtKB"/>
</dbReference>
<dbReference type="GO" id="GO:0005635">
    <property type="term" value="C:nuclear envelope"/>
    <property type="evidence" value="ECO:0000314"/>
    <property type="project" value="UniProtKB"/>
</dbReference>
<dbReference type="GO" id="GO:0005634">
    <property type="term" value="C:nucleus"/>
    <property type="evidence" value="ECO:0000314"/>
    <property type="project" value="UniProtKB"/>
</dbReference>
<dbReference type="GO" id="GO:0005886">
    <property type="term" value="C:plasma membrane"/>
    <property type="evidence" value="ECO:0000318"/>
    <property type="project" value="GO_Central"/>
</dbReference>
<dbReference type="GO" id="GO:0043235">
    <property type="term" value="C:receptor complex"/>
    <property type="evidence" value="ECO:0000318"/>
    <property type="project" value="GO_Central"/>
</dbReference>
<dbReference type="GO" id="GO:0005524">
    <property type="term" value="F:ATP binding"/>
    <property type="evidence" value="ECO:0007669"/>
    <property type="project" value="UniProtKB-KW"/>
</dbReference>
<dbReference type="GO" id="GO:0043548">
    <property type="term" value="F:phosphatidylinositol 3-kinase binding"/>
    <property type="evidence" value="ECO:0000353"/>
    <property type="project" value="RGD"/>
</dbReference>
<dbReference type="GO" id="GO:0004713">
    <property type="term" value="F:protein tyrosine kinase activity"/>
    <property type="evidence" value="ECO:0000250"/>
    <property type="project" value="UniProtKB"/>
</dbReference>
<dbReference type="GO" id="GO:0004714">
    <property type="term" value="F:transmembrane receptor protein tyrosine kinase activity"/>
    <property type="evidence" value="ECO:0000318"/>
    <property type="project" value="GO_Central"/>
</dbReference>
<dbReference type="GO" id="GO:0001618">
    <property type="term" value="F:virus receptor activity"/>
    <property type="evidence" value="ECO:0000266"/>
    <property type="project" value="RGD"/>
</dbReference>
<dbReference type="GO" id="GO:0043277">
    <property type="term" value="P:apoptotic cell clearance"/>
    <property type="evidence" value="ECO:0000250"/>
    <property type="project" value="UniProtKB"/>
</dbReference>
<dbReference type="GO" id="GO:0016477">
    <property type="term" value="P:cell migration"/>
    <property type="evidence" value="ECO:0000318"/>
    <property type="project" value="GO_Central"/>
</dbReference>
<dbReference type="GO" id="GO:0007169">
    <property type="term" value="P:cell surface receptor protein tyrosine kinase signaling pathway"/>
    <property type="evidence" value="ECO:0000318"/>
    <property type="project" value="GO_Central"/>
</dbReference>
<dbReference type="GO" id="GO:0051649">
    <property type="term" value="P:establishment of localization in cell"/>
    <property type="evidence" value="ECO:0000266"/>
    <property type="project" value="RGD"/>
</dbReference>
<dbReference type="GO" id="GO:0021885">
    <property type="term" value="P:forebrain cell migration"/>
    <property type="evidence" value="ECO:0000250"/>
    <property type="project" value="UniProtKB"/>
</dbReference>
<dbReference type="GO" id="GO:0046649">
    <property type="term" value="P:lymphocyte activation"/>
    <property type="evidence" value="ECO:0000266"/>
    <property type="project" value="RGD"/>
</dbReference>
<dbReference type="GO" id="GO:0001779">
    <property type="term" value="P:natural killer cell differentiation"/>
    <property type="evidence" value="ECO:0000266"/>
    <property type="project" value="RGD"/>
</dbReference>
<dbReference type="GO" id="GO:0050728">
    <property type="term" value="P:negative regulation of inflammatory response"/>
    <property type="evidence" value="ECO:0000250"/>
    <property type="project" value="UniProtKB"/>
</dbReference>
<dbReference type="GO" id="GO:0045824">
    <property type="term" value="P:negative regulation of innate immune response"/>
    <property type="evidence" value="ECO:0000250"/>
    <property type="project" value="UniProtKB"/>
</dbReference>
<dbReference type="GO" id="GO:0051250">
    <property type="term" value="P:negative regulation of lymphocyte activation"/>
    <property type="evidence" value="ECO:0000266"/>
    <property type="project" value="RGD"/>
</dbReference>
<dbReference type="GO" id="GO:0043524">
    <property type="term" value="P:negative regulation of neuron apoptotic process"/>
    <property type="evidence" value="ECO:0000250"/>
    <property type="project" value="UniProtKB"/>
</dbReference>
<dbReference type="GO" id="GO:0034122">
    <property type="term" value="P:negative regulation of toll-like receptor signaling pathway"/>
    <property type="evidence" value="ECO:0000250"/>
    <property type="project" value="UniProtKB"/>
</dbReference>
<dbReference type="GO" id="GO:0007399">
    <property type="term" value="P:nervous system development"/>
    <property type="evidence" value="ECO:0000318"/>
    <property type="project" value="GO_Central"/>
</dbReference>
<dbReference type="GO" id="GO:0051402">
    <property type="term" value="P:neuron apoptotic process"/>
    <property type="evidence" value="ECO:0000266"/>
    <property type="project" value="RGD"/>
</dbReference>
<dbReference type="GO" id="GO:0070050">
    <property type="term" value="P:neuron cellular homeostasis"/>
    <property type="evidence" value="ECO:0000250"/>
    <property type="project" value="UniProtKB"/>
</dbReference>
<dbReference type="GO" id="GO:0001764">
    <property type="term" value="P:neuron migration"/>
    <property type="evidence" value="ECO:0000266"/>
    <property type="project" value="RGD"/>
</dbReference>
<dbReference type="GO" id="GO:0007218">
    <property type="term" value="P:neuropeptide signaling pathway"/>
    <property type="evidence" value="ECO:0000266"/>
    <property type="project" value="RGD"/>
</dbReference>
<dbReference type="GO" id="GO:0042698">
    <property type="term" value="P:ovulation cycle"/>
    <property type="evidence" value="ECO:0000250"/>
    <property type="project" value="UniProtKB"/>
</dbReference>
<dbReference type="GO" id="GO:0006909">
    <property type="term" value="P:phagocytosis"/>
    <property type="evidence" value="ECO:0000318"/>
    <property type="project" value="GO_Central"/>
</dbReference>
<dbReference type="GO" id="GO:0030168">
    <property type="term" value="P:platelet activation"/>
    <property type="evidence" value="ECO:0000250"/>
    <property type="project" value="UniProtKB"/>
</dbReference>
<dbReference type="GO" id="GO:0070527">
    <property type="term" value="P:platelet aggregation"/>
    <property type="evidence" value="ECO:0000250"/>
    <property type="project" value="UniProtKB"/>
</dbReference>
<dbReference type="GO" id="GO:0051897">
    <property type="term" value="P:positive regulation of phosphatidylinositol 3-kinase/protein kinase B signal transduction"/>
    <property type="evidence" value="ECO:0000250"/>
    <property type="project" value="UniProtKB"/>
</dbReference>
<dbReference type="GO" id="GO:1903902">
    <property type="term" value="P:positive regulation of viral life cycle"/>
    <property type="evidence" value="ECO:0000266"/>
    <property type="project" value="RGD"/>
</dbReference>
<dbReference type="GO" id="GO:0032940">
    <property type="term" value="P:secretion by cell"/>
    <property type="evidence" value="ECO:0000250"/>
    <property type="project" value="UniProtKB"/>
</dbReference>
<dbReference type="GO" id="GO:0007283">
    <property type="term" value="P:spermatogenesis"/>
    <property type="evidence" value="ECO:0000250"/>
    <property type="project" value="UniProtKB"/>
</dbReference>
<dbReference type="GO" id="GO:0034446">
    <property type="term" value="P:substrate adhesion-dependent cell spreading"/>
    <property type="evidence" value="ECO:0000250"/>
    <property type="project" value="UniProtKB"/>
</dbReference>
<dbReference type="GO" id="GO:0060068">
    <property type="term" value="P:vagina development"/>
    <property type="evidence" value="ECO:0000266"/>
    <property type="project" value="RGD"/>
</dbReference>
<dbReference type="CDD" id="cd00063">
    <property type="entry name" value="FN3"/>
    <property type="match status" value="2"/>
</dbReference>
<dbReference type="CDD" id="cd05749">
    <property type="entry name" value="IgI_2_Axl_Tyro3_like"/>
    <property type="match status" value="1"/>
</dbReference>
<dbReference type="CDD" id="cd05074">
    <property type="entry name" value="PTKc_Tyro3"/>
    <property type="match status" value="1"/>
</dbReference>
<dbReference type="FunFam" id="1.10.510.10:FF:000089">
    <property type="entry name" value="Tyrosine-protein kinase receptor TYRO3"/>
    <property type="match status" value="1"/>
</dbReference>
<dbReference type="FunFam" id="2.60.40.10:FF:000296">
    <property type="entry name" value="Tyrosine-protein kinase receptor TYRO3"/>
    <property type="match status" value="1"/>
</dbReference>
<dbReference type="FunFam" id="2.60.40.10:FF:000484">
    <property type="entry name" value="Tyrosine-protein kinase receptor TYRO3"/>
    <property type="match status" value="1"/>
</dbReference>
<dbReference type="FunFam" id="2.60.40.10:FF:000605">
    <property type="entry name" value="Tyrosine-protein kinase receptor TYRO3"/>
    <property type="match status" value="1"/>
</dbReference>
<dbReference type="FunFam" id="2.60.40.10:FF:000780">
    <property type="entry name" value="Tyrosine-protein kinase receptor TYRO3"/>
    <property type="match status" value="1"/>
</dbReference>
<dbReference type="FunFam" id="3.30.200.20:FF:000111">
    <property type="entry name" value="Tyrosine-protein kinase receptor TYRO3"/>
    <property type="match status" value="1"/>
</dbReference>
<dbReference type="Gene3D" id="2.60.40.10">
    <property type="entry name" value="Immunoglobulins"/>
    <property type="match status" value="4"/>
</dbReference>
<dbReference type="Gene3D" id="3.30.200.20">
    <property type="entry name" value="Phosphorylase Kinase, domain 1"/>
    <property type="match status" value="1"/>
</dbReference>
<dbReference type="Gene3D" id="1.10.510.10">
    <property type="entry name" value="Transferase(Phosphotransferase) domain 1"/>
    <property type="match status" value="1"/>
</dbReference>
<dbReference type="InterPro" id="IPR003961">
    <property type="entry name" value="FN3_dom"/>
</dbReference>
<dbReference type="InterPro" id="IPR036116">
    <property type="entry name" value="FN3_sf"/>
</dbReference>
<dbReference type="InterPro" id="IPR007110">
    <property type="entry name" value="Ig-like_dom"/>
</dbReference>
<dbReference type="InterPro" id="IPR036179">
    <property type="entry name" value="Ig-like_dom_sf"/>
</dbReference>
<dbReference type="InterPro" id="IPR013783">
    <property type="entry name" value="Ig-like_fold"/>
</dbReference>
<dbReference type="InterPro" id="IPR013098">
    <property type="entry name" value="Ig_I-set"/>
</dbReference>
<dbReference type="InterPro" id="IPR003599">
    <property type="entry name" value="Ig_sub"/>
</dbReference>
<dbReference type="InterPro" id="IPR003598">
    <property type="entry name" value="Ig_sub2"/>
</dbReference>
<dbReference type="InterPro" id="IPR011009">
    <property type="entry name" value="Kinase-like_dom_sf"/>
</dbReference>
<dbReference type="InterPro" id="IPR000719">
    <property type="entry name" value="Prot_kinase_dom"/>
</dbReference>
<dbReference type="InterPro" id="IPR017441">
    <property type="entry name" value="Protein_kinase_ATP_BS"/>
</dbReference>
<dbReference type="InterPro" id="IPR050122">
    <property type="entry name" value="RTK"/>
</dbReference>
<dbReference type="InterPro" id="IPR001245">
    <property type="entry name" value="Ser-Thr/Tyr_kinase_cat_dom"/>
</dbReference>
<dbReference type="InterPro" id="IPR008266">
    <property type="entry name" value="Tyr_kinase_AS"/>
</dbReference>
<dbReference type="InterPro" id="IPR020635">
    <property type="entry name" value="Tyr_kinase_cat_dom"/>
</dbReference>
<dbReference type="PANTHER" id="PTHR24416">
    <property type="entry name" value="TYROSINE-PROTEIN KINASE RECEPTOR"/>
    <property type="match status" value="1"/>
</dbReference>
<dbReference type="PANTHER" id="PTHR24416:SF279">
    <property type="entry name" value="TYROSINE-PROTEIN KINASE RECEPTOR TYRO3"/>
    <property type="match status" value="1"/>
</dbReference>
<dbReference type="Pfam" id="PF00041">
    <property type="entry name" value="fn3"/>
    <property type="match status" value="2"/>
</dbReference>
<dbReference type="Pfam" id="PF07679">
    <property type="entry name" value="I-set"/>
    <property type="match status" value="1"/>
</dbReference>
<dbReference type="Pfam" id="PF07714">
    <property type="entry name" value="PK_Tyr_Ser-Thr"/>
    <property type="match status" value="1"/>
</dbReference>
<dbReference type="PIRSF" id="PIRSF000615">
    <property type="entry name" value="TyrPK_CSF1-R"/>
    <property type="match status" value="1"/>
</dbReference>
<dbReference type="PRINTS" id="PR00109">
    <property type="entry name" value="TYRKINASE"/>
</dbReference>
<dbReference type="SMART" id="SM00060">
    <property type="entry name" value="FN3"/>
    <property type="match status" value="2"/>
</dbReference>
<dbReference type="SMART" id="SM00409">
    <property type="entry name" value="IG"/>
    <property type="match status" value="2"/>
</dbReference>
<dbReference type="SMART" id="SM00408">
    <property type="entry name" value="IGc2"/>
    <property type="match status" value="2"/>
</dbReference>
<dbReference type="SMART" id="SM00219">
    <property type="entry name" value="TyrKc"/>
    <property type="match status" value="1"/>
</dbReference>
<dbReference type="SUPFAM" id="SSF49265">
    <property type="entry name" value="Fibronectin type III"/>
    <property type="match status" value="1"/>
</dbReference>
<dbReference type="SUPFAM" id="SSF48726">
    <property type="entry name" value="Immunoglobulin"/>
    <property type="match status" value="2"/>
</dbReference>
<dbReference type="SUPFAM" id="SSF56112">
    <property type="entry name" value="Protein kinase-like (PK-like)"/>
    <property type="match status" value="1"/>
</dbReference>
<dbReference type="PROSITE" id="PS50853">
    <property type="entry name" value="FN3"/>
    <property type="match status" value="2"/>
</dbReference>
<dbReference type="PROSITE" id="PS50835">
    <property type="entry name" value="IG_LIKE"/>
    <property type="match status" value="2"/>
</dbReference>
<dbReference type="PROSITE" id="PS00107">
    <property type="entry name" value="PROTEIN_KINASE_ATP"/>
    <property type="match status" value="1"/>
</dbReference>
<dbReference type="PROSITE" id="PS50011">
    <property type="entry name" value="PROTEIN_KINASE_DOM"/>
    <property type="match status" value="1"/>
</dbReference>
<dbReference type="PROSITE" id="PS00109">
    <property type="entry name" value="PROTEIN_KINASE_TYR"/>
    <property type="match status" value="1"/>
</dbReference>
<proteinExistence type="evidence at protein level"/>
<accession>P55146</accession>
<name>TYRO3_RAT</name>
<evidence type="ECO:0000250" key="1"/>
<evidence type="ECO:0000250" key="2">
    <source>
        <dbReference type="UniProtKB" id="Q06418"/>
    </source>
</evidence>
<evidence type="ECO:0000255" key="3"/>
<evidence type="ECO:0000255" key="4">
    <source>
        <dbReference type="PROSITE-ProRule" id="PRU00114"/>
    </source>
</evidence>
<evidence type="ECO:0000255" key="5">
    <source>
        <dbReference type="PROSITE-ProRule" id="PRU00159"/>
    </source>
</evidence>
<evidence type="ECO:0000255" key="6">
    <source>
        <dbReference type="PROSITE-ProRule" id="PRU00316"/>
    </source>
</evidence>
<evidence type="ECO:0000255" key="7">
    <source>
        <dbReference type="PROSITE-ProRule" id="PRU10028"/>
    </source>
</evidence>
<evidence type="ECO:0000256" key="8">
    <source>
        <dbReference type="SAM" id="MobiDB-lite"/>
    </source>
</evidence>
<evidence type="ECO:0007744" key="9">
    <source>
    </source>
</evidence>
<organism>
    <name type="scientific">Rattus norvegicus</name>
    <name type="common">Rat</name>
    <dbReference type="NCBI Taxonomy" id="10116"/>
    <lineage>
        <taxon>Eukaryota</taxon>
        <taxon>Metazoa</taxon>
        <taxon>Chordata</taxon>
        <taxon>Craniata</taxon>
        <taxon>Vertebrata</taxon>
        <taxon>Euteleostomi</taxon>
        <taxon>Mammalia</taxon>
        <taxon>Eutheria</taxon>
        <taxon>Euarchontoglires</taxon>
        <taxon>Glires</taxon>
        <taxon>Rodentia</taxon>
        <taxon>Myomorpha</taxon>
        <taxon>Muroidea</taxon>
        <taxon>Muridae</taxon>
        <taxon>Murinae</taxon>
        <taxon>Rattus</taxon>
    </lineage>
</organism>
<keyword id="KW-0067">ATP-binding</keyword>
<keyword id="KW-0130">Cell adhesion</keyword>
<keyword id="KW-1003">Cell membrane</keyword>
<keyword id="KW-1015">Disulfide bond</keyword>
<keyword id="KW-0325">Glycoprotein</keyword>
<keyword id="KW-0393">Immunoglobulin domain</keyword>
<keyword id="KW-0418">Kinase</keyword>
<keyword id="KW-0472">Membrane</keyword>
<keyword id="KW-0547">Nucleotide-binding</keyword>
<keyword id="KW-0597">Phosphoprotein</keyword>
<keyword id="KW-0675">Receptor</keyword>
<keyword id="KW-1185">Reference proteome</keyword>
<keyword id="KW-0677">Repeat</keyword>
<keyword id="KW-0732">Signal</keyword>
<keyword id="KW-0808">Transferase</keyword>
<keyword id="KW-0812">Transmembrane</keyword>
<keyword id="KW-1133">Transmembrane helix</keyword>
<keyword id="KW-0829">Tyrosine-protein kinase</keyword>
<reference key="1">
    <citation type="journal article" date="1995" name="J. Biochem.">
        <title>Molecular cloning and in situ localization in the brain of rat sky receptor tyrosine kinase.</title>
        <authorList>
            <person name="Ohashi K."/>
            <person name="Honda S."/>
            <person name="Ichinomiya N."/>
            <person name="Nakamura T."/>
            <person name="Mizuno K."/>
        </authorList>
    </citation>
    <scope>NUCLEOTIDE SEQUENCE [MRNA]</scope>
    <source>
        <tissue>Brain</tissue>
    </source>
</reference>
<reference key="2">
    <citation type="journal article" date="2012" name="Nat. Commun.">
        <title>Quantitative maps of protein phosphorylation sites across 14 different rat organs and tissues.</title>
        <authorList>
            <person name="Lundby A."/>
            <person name="Secher A."/>
            <person name="Lage K."/>
            <person name="Nordsborg N.B."/>
            <person name="Dmytriyev A."/>
            <person name="Lundby C."/>
            <person name="Olsen J.V."/>
        </authorList>
    </citation>
    <scope>PHOSPHORYLATION [LARGE SCALE ANALYSIS] AT SER-859</scope>
    <scope>IDENTIFICATION BY MASS SPECTROMETRY [LARGE SCALE ANALYSIS]</scope>
</reference>
<comment type="function">
    <text evidence="1">Receptor tyrosine kinase that transduces signals from the extracellular matrix into the cytoplasm by binding to several ligands including TULP1 or GAS6. Regulates many physiological processes including cell survival, migration and differentiation. Ligand binding at the cell surface induces dimerization and autophosphorylation of TYRO3 on its intracellular domain that provides docking sites for downstream signaling molecules. Following activation by ligand, interacts with PIK3R1 and thereby enhances PI3-kinase activity. Activates the AKT survival pathway, including nuclear translocation of NF-kappa-B and up-regulation of transcription of NF-kappa-B-regulated genes. TYRO3 signaling plays a role in various processes such as neuron protection from excitotoxic injury, platelet aggregation and cytoskeleton reorganization. Also plays an important role in inhibition of Toll-like receptors (TLRs)-mediated innate immune response by activating STAT1, which selectively induces production of suppressors of cytokine signaling SOCS1 and SOCS3 (By similarity).</text>
</comment>
<comment type="catalytic activity">
    <reaction evidence="7">
        <text>L-tyrosyl-[protein] + ATP = O-phospho-L-tyrosyl-[protein] + ADP + H(+)</text>
        <dbReference type="Rhea" id="RHEA:10596"/>
        <dbReference type="Rhea" id="RHEA-COMP:10136"/>
        <dbReference type="Rhea" id="RHEA-COMP:20101"/>
        <dbReference type="ChEBI" id="CHEBI:15378"/>
        <dbReference type="ChEBI" id="CHEBI:30616"/>
        <dbReference type="ChEBI" id="CHEBI:46858"/>
        <dbReference type="ChEBI" id="CHEBI:61978"/>
        <dbReference type="ChEBI" id="CHEBI:456216"/>
        <dbReference type="EC" id="2.7.10.1"/>
    </reaction>
</comment>
<comment type="subunit">
    <text evidence="1">Monomer and homodimer. Interacts (via N-terminus) with extracellular ligands TULP1 and GAS6 (By similarity). Interacts with PIK3R1; this interaction increases PI3-kinase activity (By similarity).</text>
</comment>
<comment type="subcellular location">
    <subcellularLocation>
        <location>Cell membrane</location>
        <topology>Single-pass type I membrane protein</topology>
    </subcellularLocation>
</comment>
<comment type="tissue specificity">
    <text>Abundant in the brain and lower levels in other tissues.</text>
</comment>
<comment type="PTM">
    <text evidence="1">Autophosphorylated.</text>
</comment>
<comment type="similarity">
    <text evidence="5">Belongs to the protein kinase superfamily. Tyr protein kinase family. AXL/UFO subfamily.</text>
</comment>
<protein>
    <recommendedName>
        <fullName>Tyrosine-protein kinase receptor TYRO3</fullName>
        <ecNumber>2.7.10.1</ecNumber>
    </recommendedName>
    <alternativeName>
        <fullName>Tyrosine-protein kinase SKY</fullName>
    </alternativeName>
</protein>